<protein>
    <recommendedName>
        <fullName evidence="1">Cobyric acid synthase</fullName>
    </recommendedName>
</protein>
<organism>
    <name type="scientific">Aliivibrio fischeri (strain ATCC 700601 / ES114)</name>
    <name type="common">Vibrio fischeri</name>
    <dbReference type="NCBI Taxonomy" id="312309"/>
    <lineage>
        <taxon>Bacteria</taxon>
        <taxon>Pseudomonadati</taxon>
        <taxon>Pseudomonadota</taxon>
        <taxon>Gammaproteobacteria</taxon>
        <taxon>Vibrionales</taxon>
        <taxon>Vibrionaceae</taxon>
        <taxon>Aliivibrio</taxon>
    </lineage>
</organism>
<proteinExistence type="inferred from homology"/>
<dbReference type="EMBL" id="CP000021">
    <property type="protein sequence ID" value="AAW87359.1"/>
    <property type="status" value="ALT_INIT"/>
    <property type="molecule type" value="Genomic_DNA"/>
</dbReference>
<dbReference type="RefSeq" id="WP_047863633.1">
    <property type="nucleotide sequence ID" value="NC_006841.2"/>
</dbReference>
<dbReference type="RefSeq" id="YP_206247.1">
    <property type="nucleotide sequence ID" value="NC_006841.2"/>
</dbReference>
<dbReference type="SMR" id="Q5E0T7"/>
<dbReference type="STRING" id="312309.VF_A0289"/>
<dbReference type="EnsemblBacteria" id="AAW87359">
    <property type="protein sequence ID" value="AAW87359"/>
    <property type="gene ID" value="VF_A0289"/>
</dbReference>
<dbReference type="GeneID" id="54165611"/>
<dbReference type="KEGG" id="vfi:VF_A0289"/>
<dbReference type="PATRIC" id="fig|312309.11.peg.2893"/>
<dbReference type="eggNOG" id="COG1492">
    <property type="taxonomic scope" value="Bacteria"/>
</dbReference>
<dbReference type="HOGENOM" id="CLU_019250_2_2_6"/>
<dbReference type="OrthoDB" id="9808302at2"/>
<dbReference type="UniPathway" id="UPA00148"/>
<dbReference type="Proteomes" id="UP000000537">
    <property type="component" value="Chromosome II"/>
</dbReference>
<dbReference type="GO" id="GO:0015420">
    <property type="term" value="F:ABC-type vitamin B12 transporter activity"/>
    <property type="evidence" value="ECO:0007669"/>
    <property type="project" value="UniProtKB-UniRule"/>
</dbReference>
<dbReference type="GO" id="GO:0003824">
    <property type="term" value="F:catalytic activity"/>
    <property type="evidence" value="ECO:0007669"/>
    <property type="project" value="InterPro"/>
</dbReference>
<dbReference type="GO" id="GO:0009236">
    <property type="term" value="P:cobalamin biosynthetic process"/>
    <property type="evidence" value="ECO:0007669"/>
    <property type="project" value="UniProtKB-UniRule"/>
</dbReference>
<dbReference type="CDD" id="cd05389">
    <property type="entry name" value="CobQ_N"/>
    <property type="match status" value="1"/>
</dbReference>
<dbReference type="CDD" id="cd01750">
    <property type="entry name" value="GATase1_CobQ"/>
    <property type="match status" value="1"/>
</dbReference>
<dbReference type="Gene3D" id="3.40.50.880">
    <property type="match status" value="1"/>
</dbReference>
<dbReference type="Gene3D" id="3.40.50.300">
    <property type="entry name" value="P-loop containing nucleotide triphosphate hydrolases"/>
    <property type="match status" value="1"/>
</dbReference>
<dbReference type="HAMAP" id="MF_00028">
    <property type="entry name" value="CobQ"/>
    <property type="match status" value="1"/>
</dbReference>
<dbReference type="InterPro" id="IPR029062">
    <property type="entry name" value="Class_I_gatase-like"/>
</dbReference>
<dbReference type="InterPro" id="IPR002586">
    <property type="entry name" value="CobQ/CobB/MinD/ParA_Nub-bd_dom"/>
</dbReference>
<dbReference type="InterPro" id="IPR033949">
    <property type="entry name" value="CobQ_GATase1"/>
</dbReference>
<dbReference type="InterPro" id="IPR047045">
    <property type="entry name" value="CobQ_N"/>
</dbReference>
<dbReference type="InterPro" id="IPR004459">
    <property type="entry name" value="CobQ_synth"/>
</dbReference>
<dbReference type="InterPro" id="IPR011698">
    <property type="entry name" value="GATase_3"/>
</dbReference>
<dbReference type="InterPro" id="IPR027417">
    <property type="entry name" value="P-loop_NTPase"/>
</dbReference>
<dbReference type="NCBIfam" id="TIGR00313">
    <property type="entry name" value="cobQ"/>
    <property type="match status" value="1"/>
</dbReference>
<dbReference type="NCBIfam" id="NF001989">
    <property type="entry name" value="PRK00784.1"/>
    <property type="match status" value="1"/>
</dbReference>
<dbReference type="PANTHER" id="PTHR21343:SF1">
    <property type="entry name" value="COBYRIC ACID SYNTHASE"/>
    <property type="match status" value="1"/>
</dbReference>
<dbReference type="PANTHER" id="PTHR21343">
    <property type="entry name" value="DETHIOBIOTIN SYNTHETASE"/>
    <property type="match status" value="1"/>
</dbReference>
<dbReference type="Pfam" id="PF01656">
    <property type="entry name" value="CbiA"/>
    <property type="match status" value="1"/>
</dbReference>
<dbReference type="Pfam" id="PF07685">
    <property type="entry name" value="GATase_3"/>
    <property type="match status" value="1"/>
</dbReference>
<dbReference type="SUPFAM" id="SSF52317">
    <property type="entry name" value="Class I glutamine amidotransferase-like"/>
    <property type="match status" value="1"/>
</dbReference>
<dbReference type="SUPFAM" id="SSF52540">
    <property type="entry name" value="P-loop containing nucleoside triphosphate hydrolases"/>
    <property type="match status" value="1"/>
</dbReference>
<dbReference type="PROSITE" id="PS51274">
    <property type="entry name" value="GATASE_COBBQ"/>
    <property type="match status" value="1"/>
</dbReference>
<sequence length="495" mass="54245">MRKYSPLMVQGTTSDAGKTVLVAGLCRLLANKGIQVAPFKPQNMALNSAVTEDGGEIGRAQALQADAARVKPHVHMNPILLKPNTDIGAQVIVQGKAIETMDAWGFHDYKKLAMPYVLESFSYLSNNYECVVIEGAGSPAEINLRENDIANMGFAEAADVPVIIVADIDRGGVFAHLYGTLALLSESEQARVKGFVINRFRGDISLLVPGLEWLEEKTGKPVLGVIPYLHGLNLEAEDAIKSEQLDKGKFIVKVPVVTRISNHTDFDPLRLHPEIDLQFIGKGDSLSGADFIILPGSKSVQADLEYIKSQGWDKDIERHLRYGGKVMGICGGYQMLGEHLADPLGIEGVPCRVKGLGYLSISTELQKQKQLTLVEGTLALPNQNAVKVKGYEIHAGVSTNLGKEHIPISIHTKDAMRYDGTINDENSIFGTYLHGVFDEPEAFEAILTWAGLEKCQAINMHDIQEEAIERIAKSMEDSLDLSLIWPDVFEKNKAY</sequence>
<accession>Q5E0T7</accession>
<name>COBQ_ALIF1</name>
<evidence type="ECO:0000255" key="1">
    <source>
        <dbReference type="HAMAP-Rule" id="MF_00028"/>
    </source>
</evidence>
<evidence type="ECO:0000305" key="2"/>
<keyword id="KW-0169">Cobalamin biosynthesis</keyword>
<keyword id="KW-0315">Glutamine amidotransferase</keyword>
<keyword id="KW-1185">Reference proteome</keyword>
<gene>
    <name evidence="1" type="primary">cobQ</name>
    <name type="ordered locus">VF_A0289</name>
</gene>
<feature type="chain" id="PRO_0000141339" description="Cobyric acid synthase">
    <location>
        <begin position="1"/>
        <end position="495"/>
    </location>
</feature>
<feature type="domain" description="GATase cobBQ-type" evidence="1">
    <location>
        <begin position="249"/>
        <end position="442"/>
    </location>
</feature>
<feature type="active site" description="Nucleophile" evidence="1">
    <location>
        <position position="330"/>
    </location>
</feature>
<feature type="active site" evidence="1">
    <location>
        <position position="434"/>
    </location>
</feature>
<comment type="function">
    <text evidence="1">Catalyzes amidations at positions B, D, E, and G on adenosylcobyrinic A,C-diamide. NH(2) groups are provided by glutamine, and one molecule of ATP is hydrogenolyzed for each amidation.</text>
</comment>
<comment type="pathway">
    <text evidence="1">Cofactor biosynthesis; adenosylcobalamin biosynthesis.</text>
</comment>
<comment type="similarity">
    <text evidence="1">Belongs to the CobB/CobQ family. CobQ subfamily.</text>
</comment>
<comment type="sequence caution" evidence="2">
    <conflict type="erroneous initiation">
        <sequence resource="EMBL-CDS" id="AAW87359"/>
    </conflict>
</comment>
<reference key="1">
    <citation type="journal article" date="2005" name="Proc. Natl. Acad. Sci. U.S.A.">
        <title>Complete genome sequence of Vibrio fischeri: a symbiotic bacterium with pathogenic congeners.</title>
        <authorList>
            <person name="Ruby E.G."/>
            <person name="Urbanowski M."/>
            <person name="Campbell J."/>
            <person name="Dunn A."/>
            <person name="Faini M."/>
            <person name="Gunsalus R."/>
            <person name="Lostroh P."/>
            <person name="Lupp C."/>
            <person name="McCann J."/>
            <person name="Millikan D."/>
            <person name="Schaefer A."/>
            <person name="Stabb E."/>
            <person name="Stevens A."/>
            <person name="Visick K."/>
            <person name="Whistler C."/>
            <person name="Greenberg E.P."/>
        </authorList>
    </citation>
    <scope>NUCLEOTIDE SEQUENCE [LARGE SCALE GENOMIC DNA]</scope>
    <source>
        <strain>ATCC 700601 / ES114</strain>
    </source>
</reference>